<accession>B2S953</accession>
<evidence type="ECO:0000255" key="1">
    <source>
        <dbReference type="HAMAP-Rule" id="MF_00225"/>
    </source>
</evidence>
<reference key="1">
    <citation type="journal article" date="2008" name="PLoS ONE">
        <title>Genome sequence of Brucella abortus vaccine strain S19 compared to virulent strains yields candidate virulence genes.</title>
        <authorList>
            <person name="Crasta O.R."/>
            <person name="Folkerts O."/>
            <person name="Fei Z."/>
            <person name="Mane S.P."/>
            <person name="Evans C."/>
            <person name="Martino-Catt S."/>
            <person name="Bricker B."/>
            <person name="Yu G."/>
            <person name="Du L."/>
            <person name="Sobral B.W."/>
        </authorList>
    </citation>
    <scope>NUCLEOTIDE SEQUENCE [LARGE SCALE GENOMIC DNA]</scope>
    <source>
        <strain>S19</strain>
    </source>
</reference>
<gene>
    <name evidence="1" type="primary">pyrD</name>
    <name type="ordered locus">BAbS19_I03110</name>
</gene>
<feature type="chain" id="PRO_1000100251" description="Dihydroorotate dehydrogenase (quinone)">
    <location>
        <begin position="1"/>
        <end position="364"/>
    </location>
</feature>
<feature type="active site" description="Nucleophile" evidence="1">
    <location>
        <position position="173"/>
    </location>
</feature>
<feature type="binding site" evidence="1">
    <location>
        <begin position="61"/>
        <end position="65"/>
    </location>
    <ligand>
        <name>FMN</name>
        <dbReference type="ChEBI" id="CHEBI:58210"/>
    </ligand>
</feature>
<feature type="binding site" evidence="1">
    <location>
        <position position="65"/>
    </location>
    <ligand>
        <name>substrate</name>
    </ligand>
</feature>
<feature type="binding site" evidence="1">
    <location>
        <position position="85"/>
    </location>
    <ligand>
        <name>FMN</name>
        <dbReference type="ChEBI" id="CHEBI:58210"/>
    </ligand>
</feature>
<feature type="binding site" evidence="1">
    <location>
        <begin position="110"/>
        <end position="114"/>
    </location>
    <ligand>
        <name>substrate</name>
    </ligand>
</feature>
<feature type="binding site" evidence="1">
    <location>
        <position position="139"/>
    </location>
    <ligand>
        <name>FMN</name>
        <dbReference type="ChEBI" id="CHEBI:58210"/>
    </ligand>
</feature>
<feature type="binding site" evidence="1">
    <location>
        <position position="170"/>
    </location>
    <ligand>
        <name>FMN</name>
        <dbReference type="ChEBI" id="CHEBI:58210"/>
    </ligand>
</feature>
<feature type="binding site" evidence="1">
    <location>
        <position position="170"/>
    </location>
    <ligand>
        <name>substrate</name>
    </ligand>
</feature>
<feature type="binding site" evidence="1">
    <location>
        <position position="175"/>
    </location>
    <ligand>
        <name>substrate</name>
    </ligand>
</feature>
<feature type="binding site" evidence="1">
    <location>
        <position position="215"/>
    </location>
    <ligand>
        <name>FMN</name>
        <dbReference type="ChEBI" id="CHEBI:58210"/>
    </ligand>
</feature>
<feature type="binding site" evidence="1">
    <location>
        <position position="243"/>
    </location>
    <ligand>
        <name>FMN</name>
        <dbReference type="ChEBI" id="CHEBI:58210"/>
    </ligand>
</feature>
<feature type="binding site" evidence="1">
    <location>
        <begin position="244"/>
        <end position="245"/>
    </location>
    <ligand>
        <name>substrate</name>
    </ligand>
</feature>
<feature type="binding site" evidence="1">
    <location>
        <position position="266"/>
    </location>
    <ligand>
        <name>FMN</name>
        <dbReference type="ChEBI" id="CHEBI:58210"/>
    </ligand>
</feature>
<feature type="binding site" evidence="1">
    <location>
        <position position="295"/>
    </location>
    <ligand>
        <name>FMN</name>
        <dbReference type="ChEBI" id="CHEBI:58210"/>
    </ligand>
</feature>
<feature type="binding site" evidence="1">
    <location>
        <begin position="316"/>
        <end position="317"/>
    </location>
    <ligand>
        <name>FMN</name>
        <dbReference type="ChEBI" id="CHEBI:58210"/>
    </ligand>
</feature>
<sequence length="364" mass="39257">MSGLFETLGRRALFTFDAEQAHGLSITGLKTGIVTCRTPEDPALSVKVAGLKFPNPLGMAAGYDKNAEVPDALLKLGFGFAEVGTLTPRPQSGNPRPRIFRLVDDKAVINRLGFNNEGHEAAFKRLSRRAGKSGIVGVNIGANKDAEDRIADYVAGIRRFYLLARYFTVNISSPNTPGLRNLQAREALHELLSRVLEARDEEGNMCTLKRPVFLKIAPDLTDEELDDIAAEADAQKLDGIIVSNTTLSRSGLKNPENSNETGGLSGAPLFERSTVVLARMRERVGPDMPLIGVGGIDSAETALAKIKAGADLVQLYTGLIYRGPGLPGEILRGLSTAIKHEGVSSIAELRDRDTKEWAARKLIS</sequence>
<organism>
    <name type="scientific">Brucella abortus (strain S19)</name>
    <dbReference type="NCBI Taxonomy" id="430066"/>
    <lineage>
        <taxon>Bacteria</taxon>
        <taxon>Pseudomonadati</taxon>
        <taxon>Pseudomonadota</taxon>
        <taxon>Alphaproteobacteria</taxon>
        <taxon>Hyphomicrobiales</taxon>
        <taxon>Brucellaceae</taxon>
        <taxon>Brucella/Ochrobactrum group</taxon>
        <taxon>Brucella</taxon>
    </lineage>
</organism>
<name>PYRD_BRUA1</name>
<dbReference type="EC" id="1.3.5.2" evidence="1"/>
<dbReference type="EMBL" id="CP000887">
    <property type="protein sequence ID" value="ACD71852.1"/>
    <property type="molecule type" value="Genomic_DNA"/>
</dbReference>
<dbReference type="RefSeq" id="WP_002963475.1">
    <property type="nucleotide sequence ID" value="NC_010742.1"/>
</dbReference>
<dbReference type="SMR" id="B2S953"/>
<dbReference type="KEGG" id="bmc:BAbS19_I03110"/>
<dbReference type="HOGENOM" id="CLU_013640_2_1_5"/>
<dbReference type="UniPathway" id="UPA00070">
    <property type="reaction ID" value="UER00946"/>
</dbReference>
<dbReference type="Proteomes" id="UP000002565">
    <property type="component" value="Chromosome 1"/>
</dbReference>
<dbReference type="GO" id="GO:0005737">
    <property type="term" value="C:cytoplasm"/>
    <property type="evidence" value="ECO:0007669"/>
    <property type="project" value="InterPro"/>
</dbReference>
<dbReference type="GO" id="GO:0005886">
    <property type="term" value="C:plasma membrane"/>
    <property type="evidence" value="ECO:0007669"/>
    <property type="project" value="UniProtKB-SubCell"/>
</dbReference>
<dbReference type="GO" id="GO:0106430">
    <property type="term" value="F:dihydroorotate dehydrogenase (quinone) activity"/>
    <property type="evidence" value="ECO:0007669"/>
    <property type="project" value="UniProtKB-EC"/>
</dbReference>
<dbReference type="GO" id="GO:0006207">
    <property type="term" value="P:'de novo' pyrimidine nucleobase biosynthetic process"/>
    <property type="evidence" value="ECO:0007669"/>
    <property type="project" value="InterPro"/>
</dbReference>
<dbReference type="GO" id="GO:0044205">
    <property type="term" value="P:'de novo' UMP biosynthetic process"/>
    <property type="evidence" value="ECO:0007669"/>
    <property type="project" value="UniProtKB-UniRule"/>
</dbReference>
<dbReference type="CDD" id="cd04738">
    <property type="entry name" value="DHOD_2_like"/>
    <property type="match status" value="1"/>
</dbReference>
<dbReference type="Gene3D" id="3.20.20.70">
    <property type="entry name" value="Aldolase class I"/>
    <property type="match status" value="1"/>
</dbReference>
<dbReference type="HAMAP" id="MF_00225">
    <property type="entry name" value="DHO_dh_type2"/>
    <property type="match status" value="1"/>
</dbReference>
<dbReference type="InterPro" id="IPR013785">
    <property type="entry name" value="Aldolase_TIM"/>
</dbReference>
<dbReference type="InterPro" id="IPR050074">
    <property type="entry name" value="DHO_dehydrogenase"/>
</dbReference>
<dbReference type="InterPro" id="IPR005719">
    <property type="entry name" value="Dihydroorotate_DH_2"/>
</dbReference>
<dbReference type="InterPro" id="IPR005720">
    <property type="entry name" value="Dihydroorotate_DH_cat"/>
</dbReference>
<dbReference type="InterPro" id="IPR001295">
    <property type="entry name" value="Dihydroorotate_DH_CS"/>
</dbReference>
<dbReference type="NCBIfam" id="NF003645">
    <property type="entry name" value="PRK05286.1-2"/>
    <property type="match status" value="1"/>
</dbReference>
<dbReference type="NCBIfam" id="NF003652">
    <property type="entry name" value="PRK05286.2-5"/>
    <property type="match status" value="1"/>
</dbReference>
<dbReference type="NCBIfam" id="TIGR01036">
    <property type="entry name" value="pyrD_sub2"/>
    <property type="match status" value="1"/>
</dbReference>
<dbReference type="PANTHER" id="PTHR48109:SF4">
    <property type="entry name" value="DIHYDROOROTATE DEHYDROGENASE (QUINONE), MITOCHONDRIAL"/>
    <property type="match status" value="1"/>
</dbReference>
<dbReference type="PANTHER" id="PTHR48109">
    <property type="entry name" value="DIHYDROOROTATE DEHYDROGENASE (QUINONE), MITOCHONDRIAL-RELATED"/>
    <property type="match status" value="1"/>
</dbReference>
<dbReference type="Pfam" id="PF01180">
    <property type="entry name" value="DHO_dh"/>
    <property type="match status" value="1"/>
</dbReference>
<dbReference type="SUPFAM" id="SSF51395">
    <property type="entry name" value="FMN-linked oxidoreductases"/>
    <property type="match status" value="1"/>
</dbReference>
<dbReference type="PROSITE" id="PS00911">
    <property type="entry name" value="DHODEHASE_1"/>
    <property type="match status" value="1"/>
</dbReference>
<dbReference type="PROSITE" id="PS00912">
    <property type="entry name" value="DHODEHASE_2"/>
    <property type="match status" value="1"/>
</dbReference>
<keyword id="KW-1003">Cell membrane</keyword>
<keyword id="KW-0285">Flavoprotein</keyword>
<keyword id="KW-0288">FMN</keyword>
<keyword id="KW-0472">Membrane</keyword>
<keyword id="KW-0560">Oxidoreductase</keyword>
<keyword id="KW-0665">Pyrimidine biosynthesis</keyword>
<protein>
    <recommendedName>
        <fullName evidence="1">Dihydroorotate dehydrogenase (quinone)</fullName>
        <ecNumber evidence="1">1.3.5.2</ecNumber>
    </recommendedName>
    <alternativeName>
        <fullName evidence="1">DHOdehase</fullName>
        <shortName evidence="1">DHOD</shortName>
        <shortName evidence="1">DHODase</shortName>
    </alternativeName>
    <alternativeName>
        <fullName evidence="1">Dihydroorotate oxidase</fullName>
    </alternativeName>
</protein>
<proteinExistence type="inferred from homology"/>
<comment type="function">
    <text evidence="1">Catalyzes the conversion of dihydroorotate to orotate with quinone as electron acceptor.</text>
</comment>
<comment type="catalytic activity">
    <reaction evidence="1">
        <text>(S)-dihydroorotate + a quinone = orotate + a quinol</text>
        <dbReference type="Rhea" id="RHEA:30187"/>
        <dbReference type="ChEBI" id="CHEBI:24646"/>
        <dbReference type="ChEBI" id="CHEBI:30839"/>
        <dbReference type="ChEBI" id="CHEBI:30864"/>
        <dbReference type="ChEBI" id="CHEBI:132124"/>
        <dbReference type="EC" id="1.3.5.2"/>
    </reaction>
</comment>
<comment type="cofactor">
    <cofactor evidence="1">
        <name>FMN</name>
        <dbReference type="ChEBI" id="CHEBI:58210"/>
    </cofactor>
    <text evidence="1">Binds 1 FMN per subunit.</text>
</comment>
<comment type="pathway">
    <text evidence="1">Pyrimidine metabolism; UMP biosynthesis via de novo pathway; orotate from (S)-dihydroorotate (quinone route): step 1/1.</text>
</comment>
<comment type="subunit">
    <text evidence="1">Monomer.</text>
</comment>
<comment type="subcellular location">
    <subcellularLocation>
        <location evidence="1">Cell membrane</location>
        <topology evidence="1">Peripheral membrane protein</topology>
    </subcellularLocation>
</comment>
<comment type="similarity">
    <text evidence="1">Belongs to the dihydroorotate dehydrogenase family. Type 2 subfamily.</text>
</comment>